<evidence type="ECO:0000255" key="1"/>
<evidence type="ECO:0000305" key="2"/>
<name>YGGR_ECOLI</name>
<reference key="1">
    <citation type="journal article" date="1997" name="Science">
        <title>The complete genome sequence of Escherichia coli K-12.</title>
        <authorList>
            <person name="Blattner F.R."/>
            <person name="Plunkett G. III"/>
            <person name="Bloch C.A."/>
            <person name="Perna N.T."/>
            <person name="Burland V."/>
            <person name="Riley M."/>
            <person name="Collado-Vides J."/>
            <person name="Glasner J.D."/>
            <person name="Rode C.K."/>
            <person name="Mayhew G.F."/>
            <person name="Gregor J."/>
            <person name="Davis N.W."/>
            <person name="Kirkpatrick H.A."/>
            <person name="Goeden M.A."/>
            <person name="Rose D.J."/>
            <person name="Mau B."/>
            <person name="Shao Y."/>
        </authorList>
    </citation>
    <scope>NUCLEOTIDE SEQUENCE [LARGE SCALE GENOMIC DNA]</scope>
    <source>
        <strain>K12 / MG1655 / ATCC 47076</strain>
    </source>
</reference>
<reference key="2">
    <citation type="journal article" date="2006" name="Mol. Syst. Biol.">
        <title>Highly accurate genome sequences of Escherichia coli K-12 strains MG1655 and W3110.</title>
        <authorList>
            <person name="Hayashi K."/>
            <person name="Morooka N."/>
            <person name="Yamamoto Y."/>
            <person name="Fujita K."/>
            <person name="Isono K."/>
            <person name="Choi S."/>
            <person name="Ohtsubo E."/>
            <person name="Baba T."/>
            <person name="Wanner B.L."/>
            <person name="Mori H."/>
            <person name="Horiuchi T."/>
        </authorList>
    </citation>
    <scope>NUCLEOTIDE SEQUENCE [LARGE SCALE GENOMIC DNA]</scope>
    <source>
        <strain>K12 / W3110 / ATCC 27325 / DSM 5911</strain>
    </source>
</reference>
<gene>
    <name type="primary">yggR</name>
    <name type="ordered locus">b2950</name>
    <name type="ordered locus">JW2917</name>
</gene>
<sequence length="326" mass="35994">MNMEEIVALSVKHNVSDLHLCSAWPARWRIRGRMEAAPFDTPDVEELLREWLDDDQRAILLENGQLDFAVSLAENQRLRGSAFAQRHGISLALRLLPSHCPQLEQLGAPTVLPELLKSENGLILVTGATGSGKSTTLAAMVGYLNQHADAHILTLEDPVEYLYASQRCLIQQREIGLHCMTFASGLRAALREDPDVILLGELRDSETIRLALTAAETGHLVLATLHTRGAAQAVERLVDSFPAQEKDPVRNQLAGSLRAVLSQKLEVDKQEGRVALFELLINTPAVGNLIREGKTHQLPHVIQTGQQVGMITFQQSYQHRVGEGRL</sequence>
<organism>
    <name type="scientific">Escherichia coli (strain K12)</name>
    <dbReference type="NCBI Taxonomy" id="83333"/>
    <lineage>
        <taxon>Bacteria</taxon>
        <taxon>Pseudomonadati</taxon>
        <taxon>Pseudomonadota</taxon>
        <taxon>Gammaproteobacteria</taxon>
        <taxon>Enterobacterales</taxon>
        <taxon>Enterobacteriaceae</taxon>
        <taxon>Escherichia</taxon>
    </lineage>
</organism>
<feature type="chain" id="PRO_0000207309" description="Uncharacterized protein YggR">
    <location>
        <begin position="1"/>
        <end position="326"/>
    </location>
</feature>
<feature type="binding site" evidence="1">
    <location>
        <begin position="127"/>
        <end position="134"/>
    </location>
    <ligand>
        <name>ATP</name>
        <dbReference type="ChEBI" id="CHEBI:30616"/>
    </ligand>
</feature>
<dbReference type="EMBL" id="U28377">
    <property type="protein sequence ID" value="AAA69117.1"/>
    <property type="status" value="ALT_INIT"/>
    <property type="molecule type" value="Genomic_DNA"/>
</dbReference>
<dbReference type="EMBL" id="U00096">
    <property type="protein sequence ID" value="AAC75987.2"/>
    <property type="molecule type" value="Genomic_DNA"/>
</dbReference>
<dbReference type="EMBL" id="AP009048">
    <property type="protein sequence ID" value="BAE77013.1"/>
    <property type="molecule type" value="Genomic_DNA"/>
</dbReference>
<dbReference type="PIR" id="E65080">
    <property type="entry name" value="E65080"/>
</dbReference>
<dbReference type="RefSeq" id="NP_417425.2">
    <property type="nucleotide sequence ID" value="NC_000913.3"/>
</dbReference>
<dbReference type="RefSeq" id="WP_001326494.1">
    <property type="nucleotide sequence ID" value="NZ_SSUV01000019.1"/>
</dbReference>
<dbReference type="SMR" id="P52052"/>
<dbReference type="BioGRID" id="4259242">
    <property type="interactions" value="4"/>
</dbReference>
<dbReference type="BioGRID" id="851751">
    <property type="interactions" value="2"/>
</dbReference>
<dbReference type="DIP" id="DIP-12193N"/>
<dbReference type="FunCoup" id="P52052">
    <property type="interactions" value="736"/>
</dbReference>
<dbReference type="IntAct" id="P52052">
    <property type="interactions" value="4"/>
</dbReference>
<dbReference type="STRING" id="511145.b2950"/>
<dbReference type="PaxDb" id="511145-b2950"/>
<dbReference type="EnsemblBacteria" id="AAC75987">
    <property type="protein sequence ID" value="AAC75987"/>
    <property type="gene ID" value="b2950"/>
</dbReference>
<dbReference type="GeneID" id="947430"/>
<dbReference type="KEGG" id="ecj:JW2917"/>
<dbReference type="KEGG" id="eco:b2950"/>
<dbReference type="KEGG" id="ecoc:C3026_16145"/>
<dbReference type="PATRIC" id="fig|1411691.4.peg.3782"/>
<dbReference type="EchoBASE" id="EB2803"/>
<dbReference type="eggNOG" id="COG2805">
    <property type="taxonomic scope" value="Bacteria"/>
</dbReference>
<dbReference type="HOGENOM" id="CLU_013446_4_0_6"/>
<dbReference type="InParanoid" id="P52052"/>
<dbReference type="OMA" id="WELDCSY"/>
<dbReference type="OrthoDB" id="9804785at2"/>
<dbReference type="PhylomeDB" id="P52052"/>
<dbReference type="BioCyc" id="EcoCyc:G7526-MONOMER"/>
<dbReference type="PRO" id="PR:P52052"/>
<dbReference type="Proteomes" id="UP000000625">
    <property type="component" value="Chromosome"/>
</dbReference>
<dbReference type="GO" id="GO:0005829">
    <property type="term" value="C:cytosol"/>
    <property type="evidence" value="ECO:0000314"/>
    <property type="project" value="EcoCyc"/>
</dbReference>
<dbReference type="GO" id="GO:0005524">
    <property type="term" value="F:ATP binding"/>
    <property type="evidence" value="ECO:0007669"/>
    <property type="project" value="UniProtKB-KW"/>
</dbReference>
<dbReference type="GO" id="GO:0016887">
    <property type="term" value="F:ATP hydrolysis activity"/>
    <property type="evidence" value="ECO:0000318"/>
    <property type="project" value="GO_Central"/>
</dbReference>
<dbReference type="CDD" id="cd01131">
    <property type="entry name" value="PilT"/>
    <property type="match status" value="1"/>
</dbReference>
<dbReference type="FunFam" id="3.30.450.90:FF:000009">
    <property type="entry name" value="Twitching motility protein PilT"/>
    <property type="match status" value="1"/>
</dbReference>
<dbReference type="FunFam" id="3.40.50.300:FF:002157">
    <property type="entry name" value="Type IV pilus twitching motility protein PilT"/>
    <property type="match status" value="1"/>
</dbReference>
<dbReference type="Gene3D" id="3.30.450.90">
    <property type="match status" value="1"/>
</dbReference>
<dbReference type="Gene3D" id="3.40.50.300">
    <property type="entry name" value="P-loop containing nucleotide triphosphate hydrolases"/>
    <property type="match status" value="1"/>
</dbReference>
<dbReference type="InterPro" id="IPR003593">
    <property type="entry name" value="AAA+_ATPase"/>
</dbReference>
<dbReference type="InterPro" id="IPR027417">
    <property type="entry name" value="P-loop_NTPase"/>
</dbReference>
<dbReference type="InterPro" id="IPR006321">
    <property type="entry name" value="PilT/PilU"/>
</dbReference>
<dbReference type="InterPro" id="IPR001482">
    <property type="entry name" value="T2SS/T4SS_dom"/>
</dbReference>
<dbReference type="InterPro" id="IPR050921">
    <property type="entry name" value="T4SS_GSP_E_ATPase"/>
</dbReference>
<dbReference type="NCBIfam" id="TIGR01420">
    <property type="entry name" value="pilT_fam"/>
    <property type="match status" value="1"/>
</dbReference>
<dbReference type="PANTHER" id="PTHR30486">
    <property type="entry name" value="TWITCHING MOTILITY PROTEIN PILT"/>
    <property type="match status" value="1"/>
</dbReference>
<dbReference type="PANTHER" id="PTHR30486:SF6">
    <property type="entry name" value="TYPE IV PILUS RETRACTATION ATPASE PILT"/>
    <property type="match status" value="1"/>
</dbReference>
<dbReference type="Pfam" id="PF00437">
    <property type="entry name" value="T2SSE"/>
    <property type="match status" value="1"/>
</dbReference>
<dbReference type="SMART" id="SM00382">
    <property type="entry name" value="AAA"/>
    <property type="match status" value="1"/>
</dbReference>
<dbReference type="SUPFAM" id="SSF52540">
    <property type="entry name" value="P-loop containing nucleoside triphosphate hydrolases"/>
    <property type="match status" value="1"/>
</dbReference>
<dbReference type="PROSITE" id="PS00662">
    <property type="entry name" value="T2SP_E"/>
    <property type="match status" value="1"/>
</dbReference>
<keyword id="KW-0067">ATP-binding</keyword>
<keyword id="KW-0547">Nucleotide-binding</keyword>
<keyword id="KW-1185">Reference proteome</keyword>
<keyword id="KW-0813">Transport</keyword>
<protein>
    <recommendedName>
        <fullName>Uncharacterized protein YggR</fullName>
    </recommendedName>
</protein>
<proteinExistence type="evidence at protein level"/>
<comment type="interaction">
    <interactant intactId="EBI-552531">
        <id>P52052</id>
    </interactant>
    <interactant intactId="EBI-368956">
        <id>P21599</id>
        <label>pykA</label>
    </interactant>
    <organismsDiffer>false</organismsDiffer>
    <experiments>4</experiments>
</comment>
<comment type="similarity">
    <text evidence="2">Belongs to the GSP E family.</text>
</comment>
<comment type="sequence caution" evidence="2">
    <conflict type="erroneous initiation">
        <sequence resource="EMBL-CDS" id="AAA69117"/>
    </conflict>
    <text>Extended N-terminus.</text>
</comment>
<accession>P52052</accession>
<accession>P76649</accession>
<accession>Q2M9P3</accession>